<organism>
    <name type="scientific">Cupriavidus taiwanensis (strain DSM 17343 / BCRC 17206 / CCUG 44338 / CIP 107171 / LMG 19424 / R1)</name>
    <name type="common">Ralstonia taiwanensis (strain LMG 19424)</name>
    <dbReference type="NCBI Taxonomy" id="977880"/>
    <lineage>
        <taxon>Bacteria</taxon>
        <taxon>Pseudomonadati</taxon>
        <taxon>Pseudomonadota</taxon>
        <taxon>Betaproteobacteria</taxon>
        <taxon>Burkholderiales</taxon>
        <taxon>Burkholderiaceae</taxon>
        <taxon>Cupriavidus</taxon>
    </lineage>
</organism>
<feature type="chain" id="PRO_1000127333" description="Large ribosomal subunit protein bL35">
    <location>
        <begin position="1"/>
        <end position="65"/>
    </location>
</feature>
<feature type="region of interest" description="Disordered" evidence="2">
    <location>
        <begin position="1"/>
        <end position="65"/>
    </location>
</feature>
<feature type="compositionally biased region" description="Basic residues" evidence="2">
    <location>
        <begin position="1"/>
        <end position="15"/>
    </location>
</feature>
<feature type="compositionally biased region" description="Basic residues" evidence="2">
    <location>
        <begin position="26"/>
        <end position="44"/>
    </location>
</feature>
<proteinExistence type="inferred from homology"/>
<sequence>MPKMKTKKSASKRFTARPNGSFKRGQAFKRHILTKKTTKNKRQLRGTQDVHETNLKSVRAMMPYA</sequence>
<accession>B3R4J3</accession>
<dbReference type="EMBL" id="CU633749">
    <property type="protein sequence ID" value="CAQ69225.1"/>
    <property type="molecule type" value="Genomic_DNA"/>
</dbReference>
<dbReference type="RefSeq" id="WP_006575466.1">
    <property type="nucleotide sequence ID" value="NC_010528.1"/>
</dbReference>
<dbReference type="SMR" id="B3R4J3"/>
<dbReference type="GeneID" id="98400631"/>
<dbReference type="KEGG" id="cti:RALTA_A1263"/>
<dbReference type="eggNOG" id="COG0291">
    <property type="taxonomic scope" value="Bacteria"/>
</dbReference>
<dbReference type="HOGENOM" id="CLU_169643_1_0_4"/>
<dbReference type="BioCyc" id="CTAI977880:RALTA_RS06050-MONOMER"/>
<dbReference type="Proteomes" id="UP000001692">
    <property type="component" value="Chromosome 1"/>
</dbReference>
<dbReference type="GO" id="GO:0022625">
    <property type="term" value="C:cytosolic large ribosomal subunit"/>
    <property type="evidence" value="ECO:0007669"/>
    <property type="project" value="TreeGrafter"/>
</dbReference>
<dbReference type="GO" id="GO:0003735">
    <property type="term" value="F:structural constituent of ribosome"/>
    <property type="evidence" value="ECO:0007669"/>
    <property type="project" value="InterPro"/>
</dbReference>
<dbReference type="GO" id="GO:0006412">
    <property type="term" value="P:translation"/>
    <property type="evidence" value="ECO:0007669"/>
    <property type="project" value="UniProtKB-UniRule"/>
</dbReference>
<dbReference type="FunFam" id="4.10.410.60:FF:000001">
    <property type="entry name" value="50S ribosomal protein L35"/>
    <property type="match status" value="1"/>
</dbReference>
<dbReference type="Gene3D" id="4.10.410.60">
    <property type="match status" value="1"/>
</dbReference>
<dbReference type="HAMAP" id="MF_00514">
    <property type="entry name" value="Ribosomal_bL35"/>
    <property type="match status" value="1"/>
</dbReference>
<dbReference type="InterPro" id="IPR001706">
    <property type="entry name" value="Ribosomal_bL35"/>
</dbReference>
<dbReference type="InterPro" id="IPR021137">
    <property type="entry name" value="Ribosomal_bL35-like"/>
</dbReference>
<dbReference type="InterPro" id="IPR018265">
    <property type="entry name" value="Ribosomal_bL35_CS"/>
</dbReference>
<dbReference type="InterPro" id="IPR037229">
    <property type="entry name" value="Ribosomal_bL35_sf"/>
</dbReference>
<dbReference type="NCBIfam" id="TIGR00001">
    <property type="entry name" value="rpmI_bact"/>
    <property type="match status" value="1"/>
</dbReference>
<dbReference type="PANTHER" id="PTHR33343">
    <property type="entry name" value="54S RIBOSOMAL PROTEIN BL35M"/>
    <property type="match status" value="1"/>
</dbReference>
<dbReference type="PANTHER" id="PTHR33343:SF1">
    <property type="entry name" value="LARGE RIBOSOMAL SUBUNIT PROTEIN BL35M"/>
    <property type="match status" value="1"/>
</dbReference>
<dbReference type="Pfam" id="PF01632">
    <property type="entry name" value="Ribosomal_L35p"/>
    <property type="match status" value="1"/>
</dbReference>
<dbReference type="PRINTS" id="PR00064">
    <property type="entry name" value="RIBOSOMALL35"/>
</dbReference>
<dbReference type="SUPFAM" id="SSF143034">
    <property type="entry name" value="L35p-like"/>
    <property type="match status" value="1"/>
</dbReference>
<dbReference type="PROSITE" id="PS00936">
    <property type="entry name" value="RIBOSOMAL_L35"/>
    <property type="match status" value="1"/>
</dbReference>
<reference key="1">
    <citation type="journal article" date="2008" name="Genome Res.">
        <title>Genome sequence of the beta-rhizobium Cupriavidus taiwanensis and comparative genomics of rhizobia.</title>
        <authorList>
            <person name="Amadou C."/>
            <person name="Pascal G."/>
            <person name="Mangenot S."/>
            <person name="Glew M."/>
            <person name="Bontemps C."/>
            <person name="Capela D."/>
            <person name="Carrere S."/>
            <person name="Cruveiller S."/>
            <person name="Dossat C."/>
            <person name="Lajus A."/>
            <person name="Marchetti M."/>
            <person name="Poinsot V."/>
            <person name="Rouy Z."/>
            <person name="Servin B."/>
            <person name="Saad M."/>
            <person name="Schenowitz C."/>
            <person name="Barbe V."/>
            <person name="Batut J."/>
            <person name="Medigue C."/>
            <person name="Masson-Boivin C."/>
        </authorList>
    </citation>
    <scope>NUCLEOTIDE SEQUENCE [LARGE SCALE GENOMIC DNA]</scope>
    <source>
        <strain>DSM 17343 / BCRC 17206 / CCUG 44338 / CIP 107171 / LMG 19424 / R1</strain>
    </source>
</reference>
<protein>
    <recommendedName>
        <fullName evidence="1">Large ribosomal subunit protein bL35</fullName>
    </recommendedName>
    <alternativeName>
        <fullName evidence="3">50S ribosomal protein L35</fullName>
    </alternativeName>
</protein>
<evidence type="ECO:0000255" key="1">
    <source>
        <dbReference type="HAMAP-Rule" id="MF_00514"/>
    </source>
</evidence>
<evidence type="ECO:0000256" key="2">
    <source>
        <dbReference type="SAM" id="MobiDB-lite"/>
    </source>
</evidence>
<evidence type="ECO:0000305" key="3"/>
<comment type="similarity">
    <text evidence="1">Belongs to the bacterial ribosomal protein bL35 family.</text>
</comment>
<keyword id="KW-0687">Ribonucleoprotein</keyword>
<keyword id="KW-0689">Ribosomal protein</keyword>
<gene>
    <name evidence="1" type="primary">rpmI</name>
    <name type="ordered locus">RALTA_A1263</name>
</gene>
<name>RL35_CUPTR</name>